<comment type="function">
    <text evidence="1">Catalyzes the NADPH-dependent reduction of L-glutamate 5-phosphate into L-glutamate 5-semialdehyde and phosphate. The product spontaneously undergoes cyclization to form 1-pyrroline-5-carboxylate.</text>
</comment>
<comment type="catalytic activity">
    <reaction evidence="1">
        <text>L-glutamate 5-semialdehyde + phosphate + NADP(+) = L-glutamyl 5-phosphate + NADPH + H(+)</text>
        <dbReference type="Rhea" id="RHEA:19541"/>
        <dbReference type="ChEBI" id="CHEBI:15378"/>
        <dbReference type="ChEBI" id="CHEBI:43474"/>
        <dbReference type="ChEBI" id="CHEBI:57783"/>
        <dbReference type="ChEBI" id="CHEBI:58066"/>
        <dbReference type="ChEBI" id="CHEBI:58274"/>
        <dbReference type="ChEBI" id="CHEBI:58349"/>
        <dbReference type="EC" id="1.2.1.41"/>
    </reaction>
</comment>
<comment type="pathway">
    <text evidence="1">Amino-acid biosynthesis; L-proline biosynthesis; L-glutamate 5-semialdehyde from L-glutamate: step 2/2.</text>
</comment>
<comment type="subcellular location">
    <subcellularLocation>
        <location evidence="1">Cytoplasm</location>
    </subcellularLocation>
</comment>
<comment type="similarity">
    <text evidence="1">Belongs to the gamma-glutamyl phosphate reductase family.</text>
</comment>
<evidence type="ECO:0000255" key="1">
    <source>
        <dbReference type="HAMAP-Rule" id="MF_00412"/>
    </source>
</evidence>
<dbReference type="EC" id="1.2.1.41" evidence="1"/>
<dbReference type="EMBL" id="CP000675">
    <property type="protein sequence ID" value="ABQ55004.1"/>
    <property type="molecule type" value="Genomic_DNA"/>
</dbReference>
<dbReference type="RefSeq" id="WP_011946594.1">
    <property type="nucleotide sequence ID" value="NZ_JAPMSS010000002.1"/>
</dbReference>
<dbReference type="SMR" id="A5ICA4"/>
<dbReference type="KEGG" id="lpc:LPC_1035"/>
<dbReference type="HOGENOM" id="CLU_030231_0_0_6"/>
<dbReference type="UniPathway" id="UPA00098">
    <property type="reaction ID" value="UER00360"/>
</dbReference>
<dbReference type="PHI-base" id="PHI:11263"/>
<dbReference type="GO" id="GO:0005737">
    <property type="term" value="C:cytoplasm"/>
    <property type="evidence" value="ECO:0007669"/>
    <property type="project" value="UniProtKB-SubCell"/>
</dbReference>
<dbReference type="GO" id="GO:0004350">
    <property type="term" value="F:glutamate-5-semialdehyde dehydrogenase activity"/>
    <property type="evidence" value="ECO:0007669"/>
    <property type="project" value="UniProtKB-UniRule"/>
</dbReference>
<dbReference type="GO" id="GO:0050661">
    <property type="term" value="F:NADP binding"/>
    <property type="evidence" value="ECO:0007669"/>
    <property type="project" value="InterPro"/>
</dbReference>
<dbReference type="GO" id="GO:0055129">
    <property type="term" value="P:L-proline biosynthetic process"/>
    <property type="evidence" value="ECO:0007669"/>
    <property type="project" value="UniProtKB-UniRule"/>
</dbReference>
<dbReference type="CDD" id="cd07079">
    <property type="entry name" value="ALDH_F18-19_ProA-GPR"/>
    <property type="match status" value="1"/>
</dbReference>
<dbReference type="Gene3D" id="3.40.605.10">
    <property type="entry name" value="Aldehyde Dehydrogenase, Chain A, domain 1"/>
    <property type="match status" value="1"/>
</dbReference>
<dbReference type="Gene3D" id="3.40.309.10">
    <property type="entry name" value="Aldehyde Dehydrogenase, Chain A, domain 2"/>
    <property type="match status" value="1"/>
</dbReference>
<dbReference type="HAMAP" id="MF_00412">
    <property type="entry name" value="ProA"/>
    <property type="match status" value="1"/>
</dbReference>
<dbReference type="InterPro" id="IPR016161">
    <property type="entry name" value="Ald_DH/histidinol_DH"/>
</dbReference>
<dbReference type="InterPro" id="IPR016163">
    <property type="entry name" value="Ald_DH_C"/>
</dbReference>
<dbReference type="InterPro" id="IPR016162">
    <property type="entry name" value="Ald_DH_N"/>
</dbReference>
<dbReference type="InterPro" id="IPR020593">
    <property type="entry name" value="G-glutamylP_reductase_CS"/>
</dbReference>
<dbReference type="InterPro" id="IPR012134">
    <property type="entry name" value="Glu-5-SA_DH"/>
</dbReference>
<dbReference type="InterPro" id="IPR000965">
    <property type="entry name" value="GPR_dom"/>
</dbReference>
<dbReference type="NCBIfam" id="NF001221">
    <property type="entry name" value="PRK00197.1"/>
    <property type="match status" value="1"/>
</dbReference>
<dbReference type="NCBIfam" id="TIGR00407">
    <property type="entry name" value="proA"/>
    <property type="match status" value="1"/>
</dbReference>
<dbReference type="PANTHER" id="PTHR11063:SF8">
    <property type="entry name" value="DELTA-1-PYRROLINE-5-CARBOXYLATE SYNTHASE"/>
    <property type="match status" value="1"/>
</dbReference>
<dbReference type="PANTHER" id="PTHR11063">
    <property type="entry name" value="GLUTAMATE SEMIALDEHYDE DEHYDROGENASE"/>
    <property type="match status" value="1"/>
</dbReference>
<dbReference type="PIRSF" id="PIRSF000151">
    <property type="entry name" value="GPR"/>
    <property type="match status" value="1"/>
</dbReference>
<dbReference type="SUPFAM" id="SSF53720">
    <property type="entry name" value="ALDH-like"/>
    <property type="match status" value="1"/>
</dbReference>
<dbReference type="PROSITE" id="PS01223">
    <property type="entry name" value="PROA"/>
    <property type="match status" value="1"/>
</dbReference>
<sequence length="417" mass="46116">MNIDIANQLRAAKKATTDLNLIQSDTRTIILKTLAANLEKHIENIIQENQKDLSLMLEQDPRYDRLLLNKERILSLANDVRKVADLPNPLGVNLLEKSMPNGLSIKKITVPLGVIAVIYESRPNVTIDIFSLCFKSGNVCILKGGKEAHFTNSYLLLLIKNTLKNFNINTDIVCLLPPERALMTQLLNATGLVDLCIPRGSQNLINFVRDNAKIPVIETGAGIVHTYFDKSGDLGKGKKIINNAKTRRVSVCNALDTLIIHADRLKDLPELVETLSQKNVIIYADQDAYQVLDKNYPKQLLIKAKPQDFGHEFLDYKLAIKTVPNIKAAIDHIQQFSSHHSEAVIAEDESAIDKFLTEVDAAAVYANASTSFTDGGEFGLGAEIGISTQKVHARGPMGLDALTSYKWVIRGTGQIRN</sequence>
<organism>
    <name type="scientific">Legionella pneumophila (strain Corby)</name>
    <dbReference type="NCBI Taxonomy" id="400673"/>
    <lineage>
        <taxon>Bacteria</taxon>
        <taxon>Pseudomonadati</taxon>
        <taxon>Pseudomonadota</taxon>
        <taxon>Gammaproteobacteria</taxon>
        <taxon>Legionellales</taxon>
        <taxon>Legionellaceae</taxon>
        <taxon>Legionella</taxon>
    </lineage>
</organism>
<accession>A5ICA4</accession>
<name>PROA_LEGPC</name>
<gene>
    <name evidence="1" type="primary">proA</name>
    <name type="ordered locus">LPC_1035</name>
</gene>
<protein>
    <recommendedName>
        <fullName evidence="1">Gamma-glutamyl phosphate reductase</fullName>
        <shortName evidence="1">GPR</shortName>
        <ecNumber evidence="1">1.2.1.41</ecNumber>
    </recommendedName>
    <alternativeName>
        <fullName evidence="1">Glutamate-5-semialdehyde dehydrogenase</fullName>
    </alternativeName>
    <alternativeName>
        <fullName evidence="1">Glutamyl-gamma-semialdehyde dehydrogenase</fullName>
        <shortName evidence="1">GSA dehydrogenase</shortName>
    </alternativeName>
</protein>
<keyword id="KW-0028">Amino-acid biosynthesis</keyword>
<keyword id="KW-0963">Cytoplasm</keyword>
<keyword id="KW-0521">NADP</keyword>
<keyword id="KW-0560">Oxidoreductase</keyword>
<keyword id="KW-0641">Proline biosynthesis</keyword>
<feature type="chain" id="PRO_1000049958" description="Gamma-glutamyl phosphate reductase">
    <location>
        <begin position="1"/>
        <end position="417"/>
    </location>
</feature>
<proteinExistence type="inferred from homology"/>
<reference key="1">
    <citation type="submission" date="2006-11" db="EMBL/GenBank/DDBJ databases">
        <title>Identification and characterization of a new conjugation/ type IVA secretion system (trb/tra) of L. pneumophila Corby localized on a mobile genomic island.</title>
        <authorList>
            <person name="Gloeckner G."/>
            <person name="Albert-Weissenberger C."/>
            <person name="Weinmann E."/>
            <person name="Jacobi S."/>
            <person name="Schunder E."/>
            <person name="Steinert M."/>
            <person name="Buchrieser C."/>
            <person name="Hacker J."/>
            <person name="Heuner K."/>
        </authorList>
    </citation>
    <scope>NUCLEOTIDE SEQUENCE [LARGE SCALE GENOMIC DNA]</scope>
    <source>
        <strain>Corby</strain>
    </source>
</reference>